<sequence>MKPSVIGLKCKDTDKVDWKRGLSSYLKRIYGSRQWKEFYDEQLCVEMDHVRNNANGELGAVTLVEQNYKYYAYLEQLYLRLGNNIGQFKLEFTWYDAEYGLVSSPTKHTQKTLVFEKSCTLYNLGVALTEVANEKINEDFKTAMVHMAKAMECFRYLSENFFNSPSADLQTENTKFLSDLSHAEAQEMFLINAINNGTSEKQASLISKLAYSGSNLYENCWEFLRTEEGGLTPYGEARWNSIVSGKHHFFRSLAAYYNALALEQNNKYGEAIAFLKLATQCLSSSLPYKYALNDNFDFDGFGETIKDKTKQLIKDNDYIFHDSIPQSVSLSSIKALDAIKAPKWEEQLKPFMEAIAHKCEKLYRGIVPMEVFEKESIYSEKKASMLRQCINDSETADMEYSSFIEFTHLPNLLSDLKRRYKSQNFSGTTDPQGDMMRDQIQSWIKSISQSKYKDPDEQLKLISSKKQEILTLLAGLPSEQKENVVKLKMALVEAAASDEKLFSLVQPYAAQLRLLKQPDELWKIFNMFSIDESNKQSLLDIDDSKNQEILAKISDIEQMAEDLRLLKEERGRTLKELKSQTNDDDITNTLLVNSKAESEELEVIFKKELDKFKPLTTRIEATIFKQESVVNEVKNELDNVFSLSGLENKTSEEEEKQKKRKEFFMQIEEAATKFLIFNNDLPKGLEFYDSLLKMSKDLAVSVKVQNNASGSDNNSNNGYVSGNVIPPSLPPQPRNVGSSIDSQFQSMNLGSVPTPQRFPQPPAPNSRPIVSMENYTSQFSVPPAHGDLPPAYNQVPLVPTRNYDQPHGSGNYPGNVSSQHPVSSSPIPGAYDQVPMVPPKQPPAEGRSQISRQEQMEREERELQRDPTAFYKKSSVFDESLYSRYSGK</sequence>
<organism>
    <name type="scientific">Candida glabrata (strain ATCC 2001 / BCRC 20586 / JCM 3761 / NBRC 0622 / NRRL Y-65 / CBS 138)</name>
    <name type="common">Yeast</name>
    <name type="synonym">Nakaseomyces glabratus</name>
    <dbReference type="NCBI Taxonomy" id="284593"/>
    <lineage>
        <taxon>Eukaryota</taxon>
        <taxon>Fungi</taxon>
        <taxon>Dikarya</taxon>
        <taxon>Ascomycota</taxon>
        <taxon>Saccharomycotina</taxon>
        <taxon>Saccharomycetes</taxon>
        <taxon>Saccharomycetales</taxon>
        <taxon>Saccharomycetaceae</taxon>
        <taxon>Nakaseomyces</taxon>
    </lineage>
</organism>
<feature type="chain" id="PRO_0000218862" description="Vacuolar protein-sorting protein BRO1">
    <location>
        <begin position="1"/>
        <end position="888"/>
    </location>
</feature>
<feature type="domain" description="BRO1" evidence="3">
    <location>
        <begin position="4"/>
        <end position="400"/>
    </location>
</feature>
<feature type="region of interest" description="Disordered" evidence="4">
    <location>
        <begin position="706"/>
        <end position="873"/>
    </location>
</feature>
<feature type="coiled-coil region" evidence="2">
    <location>
        <begin position="543"/>
        <end position="578"/>
    </location>
</feature>
<feature type="compositionally biased region" description="Low complexity" evidence="4">
    <location>
        <begin position="706"/>
        <end position="723"/>
    </location>
</feature>
<feature type="compositionally biased region" description="Polar residues" evidence="4">
    <location>
        <begin position="735"/>
        <end position="751"/>
    </location>
</feature>
<feature type="compositionally biased region" description="Pro residues" evidence="4">
    <location>
        <begin position="756"/>
        <end position="765"/>
    </location>
</feature>
<feature type="compositionally biased region" description="Polar residues" evidence="4">
    <location>
        <begin position="812"/>
        <end position="826"/>
    </location>
</feature>
<feature type="compositionally biased region" description="Basic and acidic residues" evidence="4">
    <location>
        <begin position="854"/>
        <end position="865"/>
    </location>
</feature>
<keyword id="KW-0175">Coiled coil</keyword>
<keyword id="KW-0963">Cytoplasm</keyword>
<keyword id="KW-0967">Endosome</keyword>
<keyword id="KW-0653">Protein transport</keyword>
<keyword id="KW-1185">Reference proteome</keyword>
<keyword id="KW-0813">Transport</keyword>
<protein>
    <recommendedName>
        <fullName>Vacuolar protein-sorting protein BRO1</fullName>
    </recommendedName>
    <alternativeName>
        <fullName>BRO domain-containing protein 1</fullName>
    </alternativeName>
</protein>
<evidence type="ECO:0000250" key="1"/>
<evidence type="ECO:0000255" key="2"/>
<evidence type="ECO:0000255" key="3">
    <source>
        <dbReference type="PROSITE-ProRule" id="PRU00526"/>
    </source>
</evidence>
<evidence type="ECO:0000256" key="4">
    <source>
        <dbReference type="SAM" id="MobiDB-lite"/>
    </source>
</evidence>
<evidence type="ECO:0000305" key="5"/>
<reference key="1">
    <citation type="journal article" date="2004" name="Nature">
        <title>Genome evolution in yeasts.</title>
        <authorList>
            <person name="Dujon B."/>
            <person name="Sherman D."/>
            <person name="Fischer G."/>
            <person name="Durrens P."/>
            <person name="Casaregola S."/>
            <person name="Lafontaine I."/>
            <person name="de Montigny J."/>
            <person name="Marck C."/>
            <person name="Neuveglise C."/>
            <person name="Talla E."/>
            <person name="Goffard N."/>
            <person name="Frangeul L."/>
            <person name="Aigle M."/>
            <person name="Anthouard V."/>
            <person name="Babour A."/>
            <person name="Barbe V."/>
            <person name="Barnay S."/>
            <person name="Blanchin S."/>
            <person name="Beckerich J.-M."/>
            <person name="Beyne E."/>
            <person name="Bleykasten C."/>
            <person name="Boisrame A."/>
            <person name="Boyer J."/>
            <person name="Cattolico L."/>
            <person name="Confanioleri F."/>
            <person name="de Daruvar A."/>
            <person name="Despons L."/>
            <person name="Fabre E."/>
            <person name="Fairhead C."/>
            <person name="Ferry-Dumazet H."/>
            <person name="Groppi A."/>
            <person name="Hantraye F."/>
            <person name="Hennequin C."/>
            <person name="Jauniaux N."/>
            <person name="Joyet P."/>
            <person name="Kachouri R."/>
            <person name="Kerrest A."/>
            <person name="Koszul R."/>
            <person name="Lemaire M."/>
            <person name="Lesur I."/>
            <person name="Ma L."/>
            <person name="Muller H."/>
            <person name="Nicaud J.-M."/>
            <person name="Nikolski M."/>
            <person name="Oztas S."/>
            <person name="Ozier-Kalogeropoulos O."/>
            <person name="Pellenz S."/>
            <person name="Potier S."/>
            <person name="Richard G.-F."/>
            <person name="Straub M.-L."/>
            <person name="Suleau A."/>
            <person name="Swennen D."/>
            <person name="Tekaia F."/>
            <person name="Wesolowski-Louvel M."/>
            <person name="Westhof E."/>
            <person name="Wirth B."/>
            <person name="Zeniou-Meyer M."/>
            <person name="Zivanovic Y."/>
            <person name="Bolotin-Fukuhara M."/>
            <person name="Thierry A."/>
            <person name="Bouchier C."/>
            <person name="Caudron B."/>
            <person name="Scarpelli C."/>
            <person name="Gaillardin C."/>
            <person name="Weissenbach J."/>
            <person name="Wincker P."/>
            <person name="Souciet J.-L."/>
        </authorList>
    </citation>
    <scope>NUCLEOTIDE SEQUENCE [LARGE SCALE GENOMIC DNA]</scope>
    <source>
        <strain>ATCC 2001 / BCRC 20586 / JCM 3761 / NBRC 0622 / NRRL Y-65 / CBS 138</strain>
    </source>
</reference>
<gene>
    <name type="primary">BRO1</name>
    <name type="ordered locus">CAGL0M06413g</name>
</gene>
<comment type="function">
    <text evidence="1">Involved in concentration and sorting of cargo proteins of the multivesicular body (MVB) for incorporation into intralumenal vesicles.</text>
</comment>
<comment type="subcellular location">
    <subcellularLocation>
        <location evidence="1">Cytoplasm</location>
    </subcellularLocation>
    <subcellularLocation>
        <location evidence="1">Endosome</location>
    </subcellularLocation>
</comment>
<comment type="similarity">
    <text evidence="5">Belongs to the BRO1 family.</text>
</comment>
<dbReference type="EMBL" id="CR380959">
    <property type="protein sequence ID" value="CAG62602.1"/>
    <property type="molecule type" value="Genomic_DNA"/>
</dbReference>
<dbReference type="RefSeq" id="XP_449626.1">
    <property type="nucleotide sequence ID" value="XM_449626.1"/>
</dbReference>
<dbReference type="SMR" id="Q6FJG8"/>
<dbReference type="FunCoup" id="Q6FJG8">
    <property type="interactions" value="104"/>
</dbReference>
<dbReference type="STRING" id="284593.Q6FJG8"/>
<dbReference type="EnsemblFungi" id="CAGL0M06413g-T">
    <property type="protein sequence ID" value="CAGL0M06413g-T-p1"/>
    <property type="gene ID" value="CAGL0M06413g"/>
</dbReference>
<dbReference type="KEGG" id="cgr:2891674"/>
<dbReference type="CGD" id="CAL0137439">
    <property type="gene designation" value="CAGL0M06413g"/>
</dbReference>
<dbReference type="VEuPathDB" id="FungiDB:CAGL0M06413g"/>
<dbReference type="eggNOG" id="KOG2220">
    <property type="taxonomic scope" value="Eukaryota"/>
</dbReference>
<dbReference type="HOGENOM" id="CLU_321635_0_0_1"/>
<dbReference type="InParanoid" id="Q6FJG8"/>
<dbReference type="OMA" id="YLKRSYG"/>
<dbReference type="Proteomes" id="UP000002428">
    <property type="component" value="Chromosome M"/>
</dbReference>
<dbReference type="GO" id="GO:0010008">
    <property type="term" value="C:endosome membrane"/>
    <property type="evidence" value="ECO:0007669"/>
    <property type="project" value="GOC"/>
</dbReference>
<dbReference type="GO" id="GO:1903561">
    <property type="term" value="C:extracellular vesicle"/>
    <property type="evidence" value="ECO:0007669"/>
    <property type="project" value="EnsemblFungi"/>
</dbReference>
<dbReference type="GO" id="GO:0035800">
    <property type="term" value="F:deubiquitinase activator activity"/>
    <property type="evidence" value="ECO:0007669"/>
    <property type="project" value="EnsemblFungi"/>
</dbReference>
<dbReference type="GO" id="GO:1904669">
    <property type="term" value="P:ATP export"/>
    <property type="evidence" value="ECO:0007669"/>
    <property type="project" value="EnsemblFungi"/>
</dbReference>
<dbReference type="GO" id="GO:0070676">
    <property type="term" value="P:intralumenal vesicle formation"/>
    <property type="evidence" value="ECO:0007669"/>
    <property type="project" value="EnsemblFungi"/>
</dbReference>
<dbReference type="GO" id="GO:0072671">
    <property type="term" value="P:mitochondria-associated ubiquitin-dependent protein catabolic process"/>
    <property type="evidence" value="ECO:0007669"/>
    <property type="project" value="EnsemblFungi"/>
</dbReference>
<dbReference type="GO" id="GO:1903003">
    <property type="term" value="P:positive regulation of protein deubiquitination"/>
    <property type="evidence" value="ECO:0007669"/>
    <property type="project" value="EnsemblFungi"/>
</dbReference>
<dbReference type="GO" id="GO:0016579">
    <property type="term" value="P:protein deubiquitination"/>
    <property type="evidence" value="ECO:0007669"/>
    <property type="project" value="EnsemblFungi"/>
</dbReference>
<dbReference type="GO" id="GO:0036010">
    <property type="term" value="P:protein localization to endosome"/>
    <property type="evidence" value="ECO:0007669"/>
    <property type="project" value="EnsemblFungi"/>
</dbReference>
<dbReference type="GO" id="GO:0043328">
    <property type="term" value="P:protein transport to vacuole involved in ubiquitin-dependent protein catabolic process via the multivesicular body sorting pathway"/>
    <property type="evidence" value="ECO:0007669"/>
    <property type="project" value="EnsemblFungi"/>
</dbReference>
<dbReference type="CDD" id="cd09242">
    <property type="entry name" value="BRO1_ScBro1_like"/>
    <property type="match status" value="1"/>
</dbReference>
<dbReference type="CDD" id="cd09237">
    <property type="entry name" value="V_ScBro1_like"/>
    <property type="match status" value="1"/>
</dbReference>
<dbReference type="Gene3D" id="1.20.120.560">
    <property type="entry name" value="alix/aip1 in complex with the ypdl late domain"/>
    <property type="match status" value="1"/>
</dbReference>
<dbReference type="Gene3D" id="1.20.140.50">
    <property type="entry name" value="alix/aip1 like domains"/>
    <property type="match status" value="1"/>
</dbReference>
<dbReference type="Gene3D" id="1.25.40.280">
    <property type="entry name" value="alix/aip1 like domains"/>
    <property type="match status" value="1"/>
</dbReference>
<dbReference type="InterPro" id="IPR025304">
    <property type="entry name" value="ALIX_V_dom"/>
</dbReference>
<dbReference type="InterPro" id="IPR004328">
    <property type="entry name" value="BRO1_dom"/>
</dbReference>
<dbReference type="InterPro" id="IPR038499">
    <property type="entry name" value="BRO1_sf"/>
</dbReference>
<dbReference type="PANTHER" id="PTHR23030">
    <property type="entry name" value="PCD6 INTERACTING PROTEIN-RELATED"/>
    <property type="match status" value="1"/>
</dbReference>
<dbReference type="PANTHER" id="PTHR23030:SF30">
    <property type="entry name" value="TYROSINE-PROTEIN PHOSPHATASE NON-RECEPTOR TYPE 23"/>
    <property type="match status" value="1"/>
</dbReference>
<dbReference type="Pfam" id="PF13949">
    <property type="entry name" value="ALIX_LYPXL_bnd"/>
    <property type="match status" value="1"/>
</dbReference>
<dbReference type="Pfam" id="PF03097">
    <property type="entry name" value="BRO1"/>
    <property type="match status" value="1"/>
</dbReference>
<dbReference type="SMART" id="SM01041">
    <property type="entry name" value="BRO1"/>
    <property type="match status" value="1"/>
</dbReference>
<dbReference type="PROSITE" id="PS51180">
    <property type="entry name" value="BRO1"/>
    <property type="match status" value="1"/>
</dbReference>
<proteinExistence type="inferred from homology"/>
<accession>Q6FJG8</accession>
<name>BRO1_CANGA</name>